<sequence length="150" mass="16733">MKVIFLVDVKGKGKKGEIKEVPTGYAQNFLIKKNLAREASSQAIGQLRGQQKAEEKAQAEILAEAKAVKKILDDEKTRVQFKEKVGPDGRTFGSITAKKISEELQKQFKVKVDKRHIVLDHPIRAIGLIEVPVKLHKEVIAEIKLNIAEA</sequence>
<accession>B4U0N8</accession>
<keyword id="KW-0687">Ribonucleoprotein</keyword>
<keyword id="KW-0689">Ribosomal protein</keyword>
<keyword id="KW-0694">RNA-binding</keyword>
<keyword id="KW-0699">rRNA-binding</keyword>
<comment type="function">
    <text evidence="1">Binds to the 23S rRNA.</text>
</comment>
<comment type="similarity">
    <text evidence="1">Belongs to the bacterial ribosomal protein bL9 family.</text>
</comment>
<evidence type="ECO:0000255" key="1">
    <source>
        <dbReference type="HAMAP-Rule" id="MF_00503"/>
    </source>
</evidence>
<evidence type="ECO:0000305" key="2"/>
<organism>
    <name type="scientific">Streptococcus equi subsp. zooepidemicus (strain MGCS10565)</name>
    <dbReference type="NCBI Taxonomy" id="552526"/>
    <lineage>
        <taxon>Bacteria</taxon>
        <taxon>Bacillati</taxon>
        <taxon>Bacillota</taxon>
        <taxon>Bacilli</taxon>
        <taxon>Lactobacillales</taxon>
        <taxon>Streptococcaceae</taxon>
        <taxon>Streptococcus</taxon>
    </lineage>
</organism>
<proteinExistence type="inferred from homology"/>
<feature type="chain" id="PRO_1000126974" description="Large ribosomal subunit protein bL9">
    <location>
        <begin position="1"/>
        <end position="150"/>
    </location>
</feature>
<gene>
    <name evidence="1" type="primary">rplI</name>
    <name type="ordered locus">Sez_1926</name>
</gene>
<name>RL9_STREM</name>
<dbReference type="EMBL" id="CP001129">
    <property type="protein sequence ID" value="ACG63247.1"/>
    <property type="molecule type" value="Genomic_DNA"/>
</dbReference>
<dbReference type="RefSeq" id="WP_012516488.1">
    <property type="nucleotide sequence ID" value="NC_011134.1"/>
</dbReference>
<dbReference type="SMR" id="B4U0N8"/>
<dbReference type="GeneID" id="83705817"/>
<dbReference type="KEGG" id="sez:Sez_1926"/>
<dbReference type="HOGENOM" id="CLU_078938_3_2_9"/>
<dbReference type="Proteomes" id="UP000001873">
    <property type="component" value="Chromosome"/>
</dbReference>
<dbReference type="GO" id="GO:1990904">
    <property type="term" value="C:ribonucleoprotein complex"/>
    <property type="evidence" value="ECO:0007669"/>
    <property type="project" value="UniProtKB-KW"/>
</dbReference>
<dbReference type="GO" id="GO:0005840">
    <property type="term" value="C:ribosome"/>
    <property type="evidence" value="ECO:0007669"/>
    <property type="project" value="UniProtKB-KW"/>
</dbReference>
<dbReference type="GO" id="GO:0019843">
    <property type="term" value="F:rRNA binding"/>
    <property type="evidence" value="ECO:0007669"/>
    <property type="project" value="UniProtKB-UniRule"/>
</dbReference>
<dbReference type="GO" id="GO:0003735">
    <property type="term" value="F:structural constituent of ribosome"/>
    <property type="evidence" value="ECO:0007669"/>
    <property type="project" value="InterPro"/>
</dbReference>
<dbReference type="GO" id="GO:0006412">
    <property type="term" value="P:translation"/>
    <property type="evidence" value="ECO:0007669"/>
    <property type="project" value="UniProtKB-UniRule"/>
</dbReference>
<dbReference type="FunFam" id="3.40.5.10:FF:000002">
    <property type="entry name" value="50S ribosomal protein L9"/>
    <property type="match status" value="1"/>
</dbReference>
<dbReference type="Gene3D" id="3.10.430.100">
    <property type="entry name" value="Ribosomal protein L9, C-terminal domain"/>
    <property type="match status" value="1"/>
</dbReference>
<dbReference type="Gene3D" id="3.40.5.10">
    <property type="entry name" value="Ribosomal protein L9, N-terminal domain"/>
    <property type="match status" value="1"/>
</dbReference>
<dbReference type="HAMAP" id="MF_00503">
    <property type="entry name" value="Ribosomal_bL9"/>
    <property type="match status" value="1"/>
</dbReference>
<dbReference type="InterPro" id="IPR000244">
    <property type="entry name" value="Ribosomal_bL9"/>
</dbReference>
<dbReference type="InterPro" id="IPR009027">
    <property type="entry name" value="Ribosomal_bL9/RNase_H1_N"/>
</dbReference>
<dbReference type="InterPro" id="IPR020594">
    <property type="entry name" value="Ribosomal_bL9_bac/chp"/>
</dbReference>
<dbReference type="InterPro" id="IPR020069">
    <property type="entry name" value="Ribosomal_bL9_C"/>
</dbReference>
<dbReference type="InterPro" id="IPR036791">
    <property type="entry name" value="Ribosomal_bL9_C_sf"/>
</dbReference>
<dbReference type="InterPro" id="IPR020070">
    <property type="entry name" value="Ribosomal_bL9_N"/>
</dbReference>
<dbReference type="InterPro" id="IPR036935">
    <property type="entry name" value="Ribosomal_bL9_N_sf"/>
</dbReference>
<dbReference type="NCBIfam" id="TIGR00158">
    <property type="entry name" value="L9"/>
    <property type="match status" value="1"/>
</dbReference>
<dbReference type="PANTHER" id="PTHR21368">
    <property type="entry name" value="50S RIBOSOMAL PROTEIN L9"/>
    <property type="match status" value="1"/>
</dbReference>
<dbReference type="Pfam" id="PF03948">
    <property type="entry name" value="Ribosomal_L9_C"/>
    <property type="match status" value="1"/>
</dbReference>
<dbReference type="Pfam" id="PF01281">
    <property type="entry name" value="Ribosomal_L9_N"/>
    <property type="match status" value="1"/>
</dbReference>
<dbReference type="SUPFAM" id="SSF55658">
    <property type="entry name" value="L9 N-domain-like"/>
    <property type="match status" value="1"/>
</dbReference>
<dbReference type="SUPFAM" id="SSF55653">
    <property type="entry name" value="Ribosomal protein L9 C-domain"/>
    <property type="match status" value="1"/>
</dbReference>
<dbReference type="PROSITE" id="PS00651">
    <property type="entry name" value="RIBOSOMAL_L9"/>
    <property type="match status" value="1"/>
</dbReference>
<protein>
    <recommendedName>
        <fullName evidence="1">Large ribosomal subunit protein bL9</fullName>
    </recommendedName>
    <alternativeName>
        <fullName evidence="2">50S ribosomal protein L9</fullName>
    </alternativeName>
</protein>
<reference key="1">
    <citation type="journal article" date="2008" name="PLoS ONE">
        <title>Genome sequence of a lancefield group C Streptococcus zooepidemicus strain causing epidemic nephritis: new information about an old disease.</title>
        <authorList>
            <person name="Beres S.B."/>
            <person name="Sesso R."/>
            <person name="Pinto S.W.L."/>
            <person name="Hoe N.P."/>
            <person name="Porcella S.F."/>
            <person name="Deleo F.R."/>
            <person name="Musser J.M."/>
        </authorList>
    </citation>
    <scope>NUCLEOTIDE SEQUENCE [LARGE SCALE GENOMIC DNA]</scope>
    <source>
        <strain>MGCS10565</strain>
    </source>
</reference>